<proteinExistence type="inferred from homology"/>
<comment type="similarity">
    <text evidence="1">Belongs to the UPF0145 family.</text>
</comment>
<dbReference type="EMBL" id="BA000045">
    <property type="protein sequence ID" value="BAC88989.1"/>
    <property type="molecule type" value="Genomic_DNA"/>
</dbReference>
<dbReference type="RefSeq" id="NP_923994.1">
    <property type="nucleotide sequence ID" value="NC_005125.1"/>
</dbReference>
<dbReference type="RefSeq" id="WP_011141050.1">
    <property type="nucleotide sequence ID" value="NC_005125.1"/>
</dbReference>
<dbReference type="SMR" id="Q7NLS3"/>
<dbReference type="STRING" id="251221.gene:10758526"/>
<dbReference type="EnsemblBacteria" id="BAC88989">
    <property type="protein sequence ID" value="BAC88989"/>
    <property type="gene ID" value="BAC88989"/>
</dbReference>
<dbReference type="KEGG" id="gvi:gll1048"/>
<dbReference type="PATRIC" id="fig|251221.4.peg.1074"/>
<dbReference type="eggNOG" id="COG0393">
    <property type="taxonomic scope" value="Bacteria"/>
</dbReference>
<dbReference type="HOGENOM" id="CLU_117144_3_2_3"/>
<dbReference type="InParanoid" id="Q7NLS3"/>
<dbReference type="OrthoDB" id="9796448at2"/>
<dbReference type="PhylomeDB" id="Q7NLS3"/>
<dbReference type="Proteomes" id="UP000000557">
    <property type="component" value="Chromosome"/>
</dbReference>
<dbReference type="Gene3D" id="3.30.110.70">
    <property type="entry name" value="Hypothetical protein apc22750. Chain B"/>
    <property type="match status" value="1"/>
</dbReference>
<dbReference type="HAMAP" id="MF_00338">
    <property type="entry name" value="UPF0145"/>
    <property type="match status" value="1"/>
</dbReference>
<dbReference type="InterPro" id="IPR035439">
    <property type="entry name" value="UPF0145_dom_sf"/>
</dbReference>
<dbReference type="InterPro" id="IPR002765">
    <property type="entry name" value="UPF0145_YbjQ-like"/>
</dbReference>
<dbReference type="NCBIfam" id="NF002776">
    <property type="entry name" value="PRK02877.1"/>
    <property type="match status" value="1"/>
</dbReference>
<dbReference type="PANTHER" id="PTHR34068">
    <property type="entry name" value="UPF0145 PROTEIN YBJQ"/>
    <property type="match status" value="1"/>
</dbReference>
<dbReference type="PANTHER" id="PTHR34068:SF1">
    <property type="entry name" value="UPF0145 PROTEIN YBJQ"/>
    <property type="match status" value="1"/>
</dbReference>
<dbReference type="Pfam" id="PF01906">
    <property type="entry name" value="YbjQ_1"/>
    <property type="match status" value="1"/>
</dbReference>
<dbReference type="SUPFAM" id="SSF117782">
    <property type="entry name" value="YbjQ-like"/>
    <property type="match status" value="1"/>
</dbReference>
<accession>Q7NLS3</accession>
<protein>
    <recommendedName>
        <fullName evidence="1">UPF0145 protein gll1048</fullName>
    </recommendedName>
</protein>
<keyword id="KW-1185">Reference proteome</keyword>
<reference key="1">
    <citation type="journal article" date="2003" name="DNA Res.">
        <title>Complete genome structure of Gloeobacter violaceus PCC 7421, a cyanobacterium that lacks thylakoids.</title>
        <authorList>
            <person name="Nakamura Y."/>
            <person name="Kaneko T."/>
            <person name="Sato S."/>
            <person name="Mimuro M."/>
            <person name="Miyashita H."/>
            <person name="Tsuchiya T."/>
            <person name="Sasamoto S."/>
            <person name="Watanabe A."/>
            <person name="Kawashima K."/>
            <person name="Kishida Y."/>
            <person name="Kiyokawa C."/>
            <person name="Kohara M."/>
            <person name="Matsumoto M."/>
            <person name="Matsuno A."/>
            <person name="Nakazaki N."/>
            <person name="Shimpo S."/>
            <person name="Takeuchi C."/>
            <person name="Yamada M."/>
            <person name="Tabata S."/>
        </authorList>
    </citation>
    <scope>NUCLEOTIDE SEQUENCE [LARGE SCALE GENOMIC DNA]</scope>
    <source>
        <strain>ATCC 29082 / PCC 7421</strain>
    </source>
</reference>
<feature type="chain" id="PRO_0000225829" description="UPF0145 protein gll1048">
    <location>
        <begin position="1"/>
        <end position="108"/>
    </location>
</feature>
<name>Y1048_GLOVI</name>
<sequence>MIISTTTAIEGRPVQGYLGVVTGEAILGANVFADFFAKIRDIVGGRSAAYERELRKARQIAMDEMTREARELGADGVIGVDIDYETIAVPEGGSMLMVSVSGTAVKLS</sequence>
<organism>
    <name type="scientific">Gloeobacter violaceus (strain ATCC 29082 / PCC 7421)</name>
    <dbReference type="NCBI Taxonomy" id="251221"/>
    <lineage>
        <taxon>Bacteria</taxon>
        <taxon>Bacillati</taxon>
        <taxon>Cyanobacteriota</taxon>
        <taxon>Cyanophyceae</taxon>
        <taxon>Gloeobacterales</taxon>
        <taxon>Gloeobacteraceae</taxon>
        <taxon>Gloeobacter</taxon>
    </lineage>
</organism>
<evidence type="ECO:0000255" key="1">
    <source>
        <dbReference type="HAMAP-Rule" id="MF_00338"/>
    </source>
</evidence>
<gene>
    <name type="ordered locus">gll1048</name>
</gene>